<proteinExistence type="evidence at protein level"/>
<evidence type="ECO:0000255" key="1">
    <source>
        <dbReference type="PROSITE-ProRule" id="PRU00498"/>
    </source>
</evidence>
<evidence type="ECO:0000255" key="2">
    <source>
        <dbReference type="PROSITE-ProRule" id="PRU01088"/>
    </source>
</evidence>
<evidence type="ECO:0000269" key="3">
    <source>
    </source>
</evidence>
<evidence type="ECO:0000303" key="4">
    <source>
    </source>
</evidence>
<evidence type="ECO:0000305" key="5"/>
<evidence type="ECO:0000305" key="6">
    <source>
    </source>
</evidence>
<protein>
    <recommendedName>
        <fullName evidence="6">Galactose-specific lectin</fullName>
    </recommendedName>
    <alternativeName>
        <fullName evidence="4">Jacalin-related lectin</fullName>
    </alternativeName>
    <alternativeName>
        <fullName evidence="4">Mulberry latex galactose-specific lectin</fullName>
        <shortName evidence="4">MLGL</shortName>
    </alternativeName>
    <component>
        <recommendedName>
            <fullName evidence="6">Galactose-specific lectin, light chain 1</fullName>
        </recommendedName>
    </component>
    <component>
        <recommendedName>
            <fullName evidence="6">Galactose-specific lectin, light chain 2</fullName>
        </recommendedName>
    </component>
    <component>
        <recommendedName>
            <fullName evidence="6">Galactose-specific lectin, heavy chain</fullName>
        </recommendedName>
    </component>
</protein>
<sequence>AKNNQQSGKSQSIVVGTWGAEVTSGVAFDDGSYTGIREINFEYNNETAIGSIQVTYDVDGTPFEAKKHASFITGFTPVKISLDFPSEYIVEVSGYTGKVSGYLVVRSLTFKTNKETYGPYGVTSGTHFKLPIQDGLIVGFKGSVGYWLDYIGFHLAL</sequence>
<reference evidence="5" key="1">
    <citation type="journal article" date="2016" name="Arch. Biochem. Biophys.">
        <title>Physico-chemical characteristics and primary structure of an affinity-purified alpha-D-galactose-specific, jacalin-related lectin from the latex of mulberry (Morus indica).</title>
        <authorList>
            <person name="Datta D."/>
            <person name="Pohlentz G."/>
            <person name="Schulte M."/>
            <person name="Kaiser M."/>
            <person name="Goycoolea F.M."/>
            <person name="Muething J."/>
            <person name="Mormann M."/>
            <person name="Swamy M.J."/>
        </authorList>
    </citation>
    <scope>PROTEIN SEQUENCE</scope>
    <scope>FUNCTION</scope>
    <scope>SUBUNIT</scope>
    <scope>MASS SPECTROMETRY</scope>
    <scope>GLYCOSYLATION AT ASN-45</scope>
    <scope>IDENTIFICATION BY MASS SPECTROMETRY</scope>
    <source>
        <tissue evidence="4">Latex</tissue>
    </source>
</reference>
<accession>C0HK14</accession>
<name>LEC_MORIN</name>
<comment type="function">
    <text evidence="3">Alpha-D-galactose-specific lectin. Has hemagglutinating activity towards human and rabbit erythrocytes. Is highly cytotoxic to human cells in vitro.</text>
</comment>
<comment type="subunit">
    <text evidence="3">Tetramer of heterodimers of light and heavy chains which are non-covalently linked.</text>
</comment>
<comment type="PTM">
    <text evidence="3">N-linked carbohydrates at Asn-45 can be of complex or paucimannose type.</text>
</comment>
<comment type="mass spectrometry">
    <molecule>Galactose-specific lectin, heavy chain</molecule>
    <text>Heavy chain.</text>
</comment>
<comment type="mass spectrometry">
    <molecule>Galactose-specific lectin, light chain 1</molecule>
    <text>Light chain 1.</text>
</comment>
<comment type="mass spectrometry">
    <molecule>Galactose-specific lectin, light chain 2</molecule>
    <text>Light chain 2.</text>
</comment>
<comment type="similarity">
    <text evidence="2">Belongs to the jacalin lectin family.</text>
</comment>
<feature type="chain" id="PRO_0000438384" description="Galactose-specific lectin, light chain 1" evidence="3">
    <location>
        <begin position="1"/>
        <end position="24"/>
    </location>
</feature>
<feature type="chain" id="PRO_0000438385" description="Galactose-specific lectin, light chain 2" evidence="3">
    <location>
        <begin position="3"/>
        <end position="24"/>
    </location>
</feature>
<feature type="chain" id="PRO_0000438386" description="Galactose-specific lectin, heavy chain" evidence="3">
    <location>
        <begin position="25"/>
        <end position="157"/>
    </location>
</feature>
<feature type="domain" description="Jacalin-type lectin" evidence="2">
    <location>
        <begin position="12"/>
        <end position="157"/>
    </location>
</feature>
<feature type="glycosylation site" description="N-linked (GlcNAc...) asparagine" evidence="1 3">
    <location>
        <position position="45"/>
    </location>
</feature>
<feature type="unsure residue" description="K or Q" evidence="3">
    <location>
        <position position="2"/>
    </location>
</feature>
<feature type="unsure residue" description="Q or K" evidence="3">
    <location>
        <position position="5"/>
    </location>
</feature>
<feature type="unsure residue" description="Q or K" evidence="3">
    <location>
        <position position="6"/>
    </location>
</feature>
<feature type="unsure residue" description="K or Q" evidence="3">
    <location>
        <position position="9"/>
    </location>
</feature>
<feature type="unsure residue" description="I or L" evidence="3">
    <location>
        <position position="13"/>
    </location>
</feature>
<feature type="unsure residue" description="I or L" evidence="3">
    <location>
        <position position="36"/>
    </location>
</feature>
<feature type="unsure residue" description="I or L" evidence="3">
    <location>
        <position position="39"/>
    </location>
</feature>
<feature type="unsure residue" description="I or L" evidence="3">
    <location>
        <position position="49"/>
    </location>
</feature>
<feature type="unsure residue" description="I or L" evidence="3">
    <location>
        <position position="52"/>
    </location>
</feature>
<feature type="unsure residue" description="Q or K" evidence="3">
    <location>
        <position position="53"/>
    </location>
</feature>
<feature type="unsure residue" description="K or Q" evidence="3">
    <location>
        <position position="66"/>
    </location>
</feature>
<feature type="unsure residue" description="K or Q" evidence="3">
    <location>
        <position position="67"/>
    </location>
</feature>
<feature type="unsure residue" description="I or L" evidence="3">
    <location>
        <position position="72"/>
    </location>
</feature>
<feature type="unsure residue" description="K or Q" evidence="3">
    <location>
        <position position="79"/>
    </location>
</feature>
<feature type="unsure residue" description="I or L" evidence="3">
    <location>
        <position position="80"/>
    </location>
</feature>
<feature type="unsure residue" description="L or I" evidence="3">
    <location>
        <position position="82"/>
    </location>
</feature>
<feature type="unsure residue" description="I or L" evidence="3">
    <location>
        <position position="89"/>
    </location>
</feature>
<feature type="unsure residue" description="K or Q" evidence="3">
    <location>
        <position position="98"/>
    </location>
</feature>
<feature type="unsure residue" description="L or I" evidence="3">
    <location>
        <position position="103"/>
    </location>
</feature>
<feature type="unsure residue" description="L or I" evidence="3">
    <location>
        <position position="108"/>
    </location>
</feature>
<feature type="unsure residue" description="K or Q" evidence="3">
    <location>
        <position position="111"/>
    </location>
</feature>
<feature type="unsure residue" description="K or Q" evidence="3">
    <location>
        <position position="114"/>
    </location>
</feature>
<feature type="unsure residue" description="K or Q" evidence="3">
    <location>
        <position position="129"/>
    </location>
</feature>
<feature type="unsure residue" description="L or I" evidence="3">
    <location>
        <position position="130"/>
    </location>
</feature>
<feature type="unsure residue" description="I or L" evidence="3">
    <location>
        <position position="132"/>
    </location>
</feature>
<feature type="unsure residue" description="Q or K" evidence="3">
    <location>
        <position position="133"/>
    </location>
</feature>
<feature type="unsure residue" description="L or I" evidence="3">
    <location>
        <position position="136"/>
    </location>
</feature>
<feature type="unsure residue" description="I or L" evidence="3">
    <location>
        <position position="137"/>
    </location>
</feature>
<feature type="unsure residue" description="K or Q" evidence="3">
    <location>
        <position position="141"/>
    </location>
</feature>
<feature type="unsure residue" description="L or I" evidence="3">
    <location>
        <position position="148"/>
    </location>
</feature>
<feature type="unsure residue" description="I or L" evidence="3">
    <location>
        <position position="151"/>
    </location>
</feature>
<feature type="unsure residue" description="L or I" evidence="3">
    <location>
        <position position="155"/>
    </location>
</feature>
<feature type="unsure residue" description="L or I" evidence="3">
    <location>
        <position position="157"/>
    </location>
</feature>
<feature type="non-consecutive residues" evidence="3">
    <location>
        <begin position="24"/>
        <end position="25"/>
    </location>
</feature>
<dbReference type="SMR" id="C0HK14"/>
<dbReference type="iPTMnet" id="C0HK14"/>
<dbReference type="GO" id="GO:0030246">
    <property type="term" value="F:carbohydrate binding"/>
    <property type="evidence" value="ECO:0007669"/>
    <property type="project" value="UniProtKB-KW"/>
</dbReference>
<dbReference type="CDD" id="cd09612">
    <property type="entry name" value="Jacalin"/>
    <property type="match status" value="1"/>
</dbReference>
<dbReference type="FunFam" id="2.100.10.30:FF:000001">
    <property type="entry name" value="Jacalin-related lectin 33"/>
    <property type="match status" value="1"/>
</dbReference>
<dbReference type="Gene3D" id="2.100.10.30">
    <property type="entry name" value="Jacalin-like lectin domain"/>
    <property type="match status" value="1"/>
</dbReference>
<dbReference type="InterPro" id="IPR001229">
    <property type="entry name" value="Jacalin-like_lectin_dom"/>
</dbReference>
<dbReference type="InterPro" id="IPR033734">
    <property type="entry name" value="Jacalin-like_lectin_dom_plant"/>
</dbReference>
<dbReference type="InterPro" id="IPR036404">
    <property type="entry name" value="Jacalin-like_lectin_dom_sf"/>
</dbReference>
<dbReference type="PANTHER" id="PTHR47293:SF15">
    <property type="entry name" value="JACALIN-RELATED LECTIN 19"/>
    <property type="match status" value="1"/>
</dbReference>
<dbReference type="PANTHER" id="PTHR47293">
    <property type="entry name" value="JACALIN-RELATED LECTIN 3"/>
    <property type="match status" value="1"/>
</dbReference>
<dbReference type="Pfam" id="PF01419">
    <property type="entry name" value="Jacalin"/>
    <property type="match status" value="1"/>
</dbReference>
<dbReference type="SMART" id="SM00915">
    <property type="entry name" value="Jacalin"/>
    <property type="match status" value="1"/>
</dbReference>
<dbReference type="SUPFAM" id="SSF51101">
    <property type="entry name" value="Mannose-binding lectins"/>
    <property type="match status" value="1"/>
</dbReference>
<dbReference type="PROSITE" id="PS51752">
    <property type="entry name" value="JACALIN_LECTIN"/>
    <property type="match status" value="1"/>
</dbReference>
<keyword id="KW-0903">Direct protein sequencing</keyword>
<keyword id="KW-0325">Glycoprotein</keyword>
<keyword id="KW-0430">Lectin</keyword>
<organism evidence="4">
    <name type="scientific">Morus indica</name>
    <name type="common">Mulberry</name>
    <dbReference type="NCBI Taxonomy" id="248361"/>
    <lineage>
        <taxon>Eukaryota</taxon>
        <taxon>Viridiplantae</taxon>
        <taxon>Streptophyta</taxon>
        <taxon>Embryophyta</taxon>
        <taxon>Tracheophyta</taxon>
        <taxon>Spermatophyta</taxon>
        <taxon>Magnoliopsida</taxon>
        <taxon>eudicotyledons</taxon>
        <taxon>Gunneridae</taxon>
        <taxon>Pentapetalae</taxon>
        <taxon>rosids</taxon>
        <taxon>fabids</taxon>
        <taxon>Rosales</taxon>
        <taxon>Moraceae</taxon>
        <taxon>Moreae</taxon>
        <taxon>Morus</taxon>
    </lineage>
</organism>